<protein>
    <recommendedName>
        <fullName>Acetate/butyrate--CoA ligase AAE7, peroxisomal</fullName>
        <ecNumber>6.2.1.1</ecNumber>
        <ecNumber>6.2.1.2</ecNumber>
    </recommendedName>
    <alternativeName>
        <fullName>AMP-binding protein 7</fullName>
        <shortName>AtAMPBP7</shortName>
    </alternativeName>
    <alternativeName>
        <fullName>Acetyl-CoA synthetase</fullName>
    </alternativeName>
    <alternativeName>
        <fullName>Acyl-activating enzyme 7</fullName>
    </alternativeName>
    <alternativeName>
        <fullName>Butyryl-CoA synthetase</fullName>
    </alternativeName>
    <alternativeName>
        <fullName>Protein ACETATE NON-UTILIZING 1</fullName>
    </alternativeName>
</protein>
<proteinExistence type="evidence at protein level"/>
<comment type="function">
    <text evidence="2 4 5 6">Peroxisomal acetate/butyrate--CoA ligase that is probably involved in the activation of exogenous acetate for entry into the glyoxylate cycle. May play a role to prevent carbon loss from peroxisomes during lipid mobilization. In vitro, is active with both acetate and butyrate.</text>
</comment>
<comment type="catalytic activity">
    <reaction evidence="2">
        <text>acetate + ATP + CoA = acetyl-CoA + AMP + diphosphate</text>
        <dbReference type="Rhea" id="RHEA:23176"/>
        <dbReference type="ChEBI" id="CHEBI:30089"/>
        <dbReference type="ChEBI" id="CHEBI:30616"/>
        <dbReference type="ChEBI" id="CHEBI:33019"/>
        <dbReference type="ChEBI" id="CHEBI:57287"/>
        <dbReference type="ChEBI" id="CHEBI:57288"/>
        <dbReference type="ChEBI" id="CHEBI:456215"/>
        <dbReference type="EC" id="6.2.1.1"/>
    </reaction>
</comment>
<comment type="catalytic activity">
    <reaction evidence="2">
        <text>a medium-chain fatty acid + ATP + CoA = a medium-chain fatty acyl-CoA + AMP + diphosphate</text>
        <dbReference type="Rhea" id="RHEA:48340"/>
        <dbReference type="ChEBI" id="CHEBI:30616"/>
        <dbReference type="ChEBI" id="CHEBI:33019"/>
        <dbReference type="ChEBI" id="CHEBI:57287"/>
        <dbReference type="ChEBI" id="CHEBI:59558"/>
        <dbReference type="ChEBI" id="CHEBI:90546"/>
        <dbReference type="ChEBI" id="CHEBI:456215"/>
        <dbReference type="EC" id="6.2.1.2"/>
    </reaction>
</comment>
<comment type="subcellular location">
    <subcellularLocation>
        <location evidence="4">Peroxisome</location>
    </subcellularLocation>
</comment>
<comment type="tissue specificity">
    <text evidence="2 4">Expressed in roots, leaves, stems, flowers and developing seeds.</text>
</comment>
<comment type="disruption phenotype">
    <text evidence="3 4">No visible phenotype under normal growth conditions, but seedlings have a strong decrease in glutamine and are resistant to the toxic acetate analog monofluoroacetic acid.</text>
</comment>
<comment type="similarity">
    <text evidence="7">Belongs to the ATP-dependent AMP-binding enzyme family.</text>
</comment>
<comment type="sequence caution" evidence="7">
    <conflict type="erroneous gene model prediction">
        <sequence resource="EMBL-CDS" id="BAA94975"/>
    </conflict>
</comment>
<organism>
    <name type="scientific">Arabidopsis thaliana</name>
    <name type="common">Mouse-ear cress</name>
    <dbReference type="NCBI Taxonomy" id="3702"/>
    <lineage>
        <taxon>Eukaryota</taxon>
        <taxon>Viridiplantae</taxon>
        <taxon>Streptophyta</taxon>
        <taxon>Embryophyta</taxon>
        <taxon>Tracheophyta</taxon>
        <taxon>Spermatophyta</taxon>
        <taxon>Magnoliopsida</taxon>
        <taxon>eudicotyledons</taxon>
        <taxon>Gunneridae</taxon>
        <taxon>Pentapetalae</taxon>
        <taxon>rosids</taxon>
        <taxon>malvids</taxon>
        <taxon>Brassicales</taxon>
        <taxon>Brassicaceae</taxon>
        <taxon>Camelineae</taxon>
        <taxon>Arabidopsis</taxon>
    </lineage>
</organism>
<evidence type="ECO:0000255" key="1"/>
<evidence type="ECO:0000269" key="2">
    <source>
    </source>
</evidence>
<evidence type="ECO:0000269" key="3">
    <source>
    </source>
</evidence>
<evidence type="ECO:0000269" key="4">
    <source>
    </source>
</evidence>
<evidence type="ECO:0000269" key="5">
    <source>
    </source>
</evidence>
<evidence type="ECO:0000269" key="6">
    <source>
    </source>
</evidence>
<evidence type="ECO:0000305" key="7"/>
<keyword id="KW-0276">Fatty acid metabolism</keyword>
<keyword id="KW-0436">Ligase</keyword>
<keyword id="KW-0443">Lipid metabolism</keyword>
<keyword id="KW-0576">Peroxisome</keyword>
<keyword id="KW-1185">Reference proteome</keyword>
<sequence>MAATKWRDIDDLPKIPANYTALTPLWFLDRAAVVHPTRKSVIHGSREYTWRQTYDRCRRLASALADRSIGPGSTVAIIAPNIPAMYEAHFGVPMCGAVLNCVNIRLNAPTVAFLLSHSQSSVIMVDQEFFTLAEDSLRLMEEKAGSSFKRPLLIVIGDHTCAPESLNRALSKGAIEYEDFLATGDPNYPWQPPADEWQSIALGYTSGTTASPKGVVLHHRGAYIMALSNPLIWGMQDGAVYLWTLPMFHCNGWCFPWSLAVLSGTSICLRQVTAKEVYSMIAKYKVTHFCAAPVVLNAIVNAPKEDTILPLPHTVHVMTAGAAPPPSVLFSMNQKGFRVAHTYGLSETYGPSTVCAWKPEWDSLPPETQAKLNARQGVRYTGMEQLDVIDTQTGKPVPADGKTAGEIVFRGNMVMKGYLKNPEANKETFAGGWFHSGDIAVKHPDNYIEIKDRSKDVIISGGENISSVEVENVVYHHPAVLEASVVARPDERWQESPCAFVTLKSDYEKHDQNKLAQDIMKFCREKLPAYWVPKSVVFGPLPKTATGKIQKHILRTKAKEMGPVPRSRL</sequence>
<accession>Q8VZF1</accession>
<accession>Q9LSQ0</accession>
<dbReference type="EC" id="6.2.1.1"/>
<dbReference type="EC" id="6.2.1.2"/>
<dbReference type="EMBL" id="AF503766">
    <property type="protein sequence ID" value="AAM28624.1"/>
    <property type="molecule type" value="mRNA"/>
</dbReference>
<dbReference type="EMBL" id="AB026636">
    <property type="protein sequence ID" value="BAA94975.1"/>
    <property type="status" value="ALT_SEQ"/>
    <property type="molecule type" value="Genomic_DNA"/>
</dbReference>
<dbReference type="EMBL" id="CP002686">
    <property type="protein sequence ID" value="AEE75883.1"/>
    <property type="molecule type" value="Genomic_DNA"/>
</dbReference>
<dbReference type="EMBL" id="AY065002">
    <property type="protein sequence ID" value="AAL57649.1"/>
    <property type="molecule type" value="mRNA"/>
</dbReference>
<dbReference type="EMBL" id="AY090269">
    <property type="protein sequence ID" value="AAL90930.1"/>
    <property type="molecule type" value="mRNA"/>
</dbReference>
<dbReference type="RefSeq" id="NP_188316.1">
    <property type="nucleotide sequence ID" value="NM_112567.4"/>
</dbReference>
<dbReference type="SMR" id="Q8VZF1"/>
<dbReference type="FunCoup" id="Q8VZF1">
    <property type="interactions" value="743"/>
</dbReference>
<dbReference type="STRING" id="3702.Q8VZF1"/>
<dbReference type="PaxDb" id="3702-AT3G16910.1"/>
<dbReference type="ProteomicsDB" id="244766"/>
<dbReference type="EnsemblPlants" id="AT3G16910.1">
    <property type="protein sequence ID" value="AT3G16910.1"/>
    <property type="gene ID" value="AT3G16910"/>
</dbReference>
<dbReference type="GeneID" id="820946"/>
<dbReference type="Gramene" id="AT3G16910.1">
    <property type="protein sequence ID" value="AT3G16910.1"/>
    <property type="gene ID" value="AT3G16910"/>
</dbReference>
<dbReference type="KEGG" id="ath:AT3G16910"/>
<dbReference type="Araport" id="AT3G16910"/>
<dbReference type="TAIR" id="AT3G16910">
    <property type="gene designation" value="AAE7"/>
</dbReference>
<dbReference type="eggNOG" id="KOG1176">
    <property type="taxonomic scope" value="Eukaryota"/>
</dbReference>
<dbReference type="HOGENOM" id="CLU_000022_59_5_1"/>
<dbReference type="InParanoid" id="Q8VZF1"/>
<dbReference type="OMA" id="CGAPIVY"/>
<dbReference type="OrthoDB" id="10253115at2759"/>
<dbReference type="PhylomeDB" id="Q8VZF1"/>
<dbReference type="BioCyc" id="ARA:AT3G16910-MONOMER"/>
<dbReference type="PRO" id="PR:Q8VZF1"/>
<dbReference type="Proteomes" id="UP000006548">
    <property type="component" value="Chromosome 3"/>
</dbReference>
<dbReference type="ExpressionAtlas" id="Q8VZF1">
    <property type="expression patterns" value="baseline and differential"/>
</dbReference>
<dbReference type="GO" id="GO:0005829">
    <property type="term" value="C:cytosol"/>
    <property type="evidence" value="ECO:0007005"/>
    <property type="project" value="TAIR"/>
</dbReference>
<dbReference type="GO" id="GO:0005777">
    <property type="term" value="C:peroxisome"/>
    <property type="evidence" value="ECO:0000314"/>
    <property type="project" value="TAIR"/>
</dbReference>
<dbReference type="GO" id="GO:0003987">
    <property type="term" value="F:acetate-CoA ligase activity"/>
    <property type="evidence" value="ECO:0000314"/>
    <property type="project" value="UniProtKB"/>
</dbReference>
<dbReference type="GO" id="GO:0031956">
    <property type="term" value="F:medium-chain fatty acid-CoA ligase activity"/>
    <property type="evidence" value="ECO:0000314"/>
    <property type="project" value="UniProtKB"/>
</dbReference>
<dbReference type="GO" id="GO:0006083">
    <property type="term" value="P:acetate metabolic process"/>
    <property type="evidence" value="ECO:0000314"/>
    <property type="project" value="UniProtKB"/>
</dbReference>
<dbReference type="GO" id="GO:0019605">
    <property type="term" value="P:butyrate metabolic process"/>
    <property type="evidence" value="ECO:0000314"/>
    <property type="project" value="UniProtKB"/>
</dbReference>
<dbReference type="GO" id="GO:0006097">
    <property type="term" value="P:glyoxylate cycle"/>
    <property type="evidence" value="ECO:0000314"/>
    <property type="project" value="TAIR"/>
</dbReference>
<dbReference type="CDD" id="cd12118">
    <property type="entry name" value="ttLC_FACS_AEE21_like"/>
    <property type="match status" value="1"/>
</dbReference>
<dbReference type="FunFam" id="3.30.300.30:FF:000008">
    <property type="entry name" value="2,3-dihydroxybenzoate-AMP ligase"/>
    <property type="match status" value="1"/>
</dbReference>
<dbReference type="FunFam" id="3.40.50.12780:FF:000003">
    <property type="entry name" value="Long-chain-fatty-acid--CoA ligase FadD"/>
    <property type="match status" value="1"/>
</dbReference>
<dbReference type="Gene3D" id="3.30.300.30">
    <property type="match status" value="1"/>
</dbReference>
<dbReference type="Gene3D" id="3.40.50.12780">
    <property type="entry name" value="N-terminal domain of ligase-like"/>
    <property type="match status" value="1"/>
</dbReference>
<dbReference type="InterPro" id="IPR025110">
    <property type="entry name" value="AMP-bd_C"/>
</dbReference>
<dbReference type="InterPro" id="IPR045851">
    <property type="entry name" value="AMP-bd_C_sf"/>
</dbReference>
<dbReference type="InterPro" id="IPR000873">
    <property type="entry name" value="AMP-dep_synth/lig_dom"/>
</dbReference>
<dbReference type="InterPro" id="IPR042099">
    <property type="entry name" value="ANL_N_sf"/>
</dbReference>
<dbReference type="NCBIfam" id="NF006020">
    <property type="entry name" value="PRK08162.1"/>
    <property type="match status" value="1"/>
</dbReference>
<dbReference type="PANTHER" id="PTHR43859:SF7">
    <property type="entry name" value="ACETATE_BUTYRATE--COA LIGASE AAE7, PEROXISOMAL"/>
    <property type="match status" value="1"/>
</dbReference>
<dbReference type="PANTHER" id="PTHR43859">
    <property type="entry name" value="ACYL-ACTIVATING ENZYME"/>
    <property type="match status" value="1"/>
</dbReference>
<dbReference type="Pfam" id="PF00501">
    <property type="entry name" value="AMP-binding"/>
    <property type="match status" value="1"/>
</dbReference>
<dbReference type="Pfam" id="PF13193">
    <property type="entry name" value="AMP-binding_C"/>
    <property type="match status" value="1"/>
</dbReference>
<dbReference type="SUPFAM" id="SSF56801">
    <property type="entry name" value="Acetyl-CoA synthetase-like"/>
    <property type="match status" value="1"/>
</dbReference>
<gene>
    <name type="primary">AAE7</name>
    <name type="synonym">ACN1</name>
    <name type="synonym">AMPBP7</name>
    <name type="ordered locus">At3g16910</name>
    <name type="ORF">K14A17.23</name>
</gene>
<feature type="chain" id="PRO_0000415718" description="Acetate/butyrate--CoA ligase AAE7, peroxisomal">
    <location>
        <begin position="1"/>
        <end position="569"/>
    </location>
</feature>
<feature type="short sequence motif" description="Microbody targeting signal" evidence="1">
    <location>
        <begin position="567"/>
        <end position="569"/>
    </location>
</feature>
<name>AEE7_ARATH</name>
<reference key="1">
    <citation type="journal article" date="2002" name="Plant Physiol.">
        <title>Arabidopsis contains nine long-chain acyl-coenzyme A synthetase genes that participate in fatty acid and glycerolipid metabolism.</title>
        <authorList>
            <person name="Shockey J.M."/>
            <person name="Fulda M.S."/>
            <person name="Browse J.A."/>
        </authorList>
    </citation>
    <scope>NUCLEOTIDE SEQUENCE [MRNA]</scope>
</reference>
<reference key="2">
    <citation type="journal article" date="2000" name="DNA Res.">
        <title>Structural analysis of Arabidopsis thaliana chromosome 3. I. Sequence features of the regions of 4,504,864 bp covered by sixty P1 and TAC clones.</title>
        <authorList>
            <person name="Sato S."/>
            <person name="Nakamura Y."/>
            <person name="Kaneko T."/>
            <person name="Katoh T."/>
            <person name="Asamizu E."/>
            <person name="Tabata S."/>
        </authorList>
    </citation>
    <scope>NUCLEOTIDE SEQUENCE [LARGE SCALE GENOMIC DNA]</scope>
    <source>
        <strain>cv. Columbia</strain>
    </source>
</reference>
<reference key="3">
    <citation type="journal article" date="2017" name="Plant J.">
        <title>Araport11: a complete reannotation of the Arabidopsis thaliana reference genome.</title>
        <authorList>
            <person name="Cheng C.Y."/>
            <person name="Krishnakumar V."/>
            <person name="Chan A.P."/>
            <person name="Thibaud-Nissen F."/>
            <person name="Schobel S."/>
            <person name="Town C.D."/>
        </authorList>
    </citation>
    <scope>GENOME REANNOTATION</scope>
    <source>
        <strain>cv. Columbia</strain>
    </source>
</reference>
<reference key="4">
    <citation type="journal article" date="2003" name="Science">
        <title>Empirical analysis of transcriptional activity in the Arabidopsis genome.</title>
        <authorList>
            <person name="Yamada K."/>
            <person name="Lim J."/>
            <person name="Dale J.M."/>
            <person name="Chen H."/>
            <person name="Shinn P."/>
            <person name="Palm C.J."/>
            <person name="Southwick A.M."/>
            <person name="Wu H.C."/>
            <person name="Kim C.J."/>
            <person name="Nguyen M."/>
            <person name="Pham P.K."/>
            <person name="Cheuk R.F."/>
            <person name="Karlin-Newmann G."/>
            <person name="Liu S.X."/>
            <person name="Lam B."/>
            <person name="Sakano H."/>
            <person name="Wu T."/>
            <person name="Yu G."/>
            <person name="Miranda M."/>
            <person name="Quach H.L."/>
            <person name="Tripp M."/>
            <person name="Chang C.H."/>
            <person name="Lee J.M."/>
            <person name="Toriumi M.J."/>
            <person name="Chan M.M."/>
            <person name="Tang C.C."/>
            <person name="Onodera C.S."/>
            <person name="Deng J.M."/>
            <person name="Akiyama K."/>
            <person name="Ansari Y."/>
            <person name="Arakawa T."/>
            <person name="Banh J."/>
            <person name="Banno F."/>
            <person name="Bowser L."/>
            <person name="Brooks S.Y."/>
            <person name="Carninci P."/>
            <person name="Chao Q."/>
            <person name="Choy N."/>
            <person name="Enju A."/>
            <person name="Goldsmith A.D."/>
            <person name="Gurjal M."/>
            <person name="Hansen N.F."/>
            <person name="Hayashizaki Y."/>
            <person name="Johnson-Hopson C."/>
            <person name="Hsuan V.W."/>
            <person name="Iida K."/>
            <person name="Karnes M."/>
            <person name="Khan S."/>
            <person name="Koesema E."/>
            <person name="Ishida J."/>
            <person name="Jiang P.X."/>
            <person name="Jones T."/>
            <person name="Kawai J."/>
            <person name="Kamiya A."/>
            <person name="Meyers C."/>
            <person name="Nakajima M."/>
            <person name="Narusaka M."/>
            <person name="Seki M."/>
            <person name="Sakurai T."/>
            <person name="Satou M."/>
            <person name="Tamse R."/>
            <person name="Vaysberg M."/>
            <person name="Wallender E.K."/>
            <person name="Wong C."/>
            <person name="Yamamura Y."/>
            <person name="Yuan S."/>
            <person name="Shinozaki K."/>
            <person name="Davis R.W."/>
            <person name="Theologis A."/>
            <person name="Ecker J.R."/>
        </authorList>
    </citation>
    <scope>NUCLEOTIDE SEQUENCE [LARGE SCALE MRNA]</scope>
    <source>
        <strain>cv. Columbia</strain>
    </source>
</reference>
<reference key="5">
    <citation type="journal article" date="2003" name="Plant Physiol.">
        <title>Arabidopsis contains a large superfamily of acyl-activating enzymes. Phylogenetic and biochemical analysis reveals a new class of acyl-coenzyme a synthetases.</title>
        <authorList>
            <person name="Shockey J.M."/>
            <person name="Fulda M.S."/>
            <person name="Browse J."/>
        </authorList>
    </citation>
    <scope>FUNCTION</scope>
    <scope>CATALYTIC ACTIVITY</scope>
    <scope>TISSUE SPECIFICITY</scope>
    <scope>GENE FAMILY</scope>
    <scope>NOMENCLATURE</scope>
</reference>
<reference key="6">
    <citation type="journal article" date="2004" name="Mol. Genet. Genomics">
        <title>Acetate non-utilizing mutants of Arabidopsis: evidence that organic acids influence carbohydrate perception in germinating seedlings.</title>
        <authorList>
            <person name="Hooks M.A."/>
            <person name="Turner J.E."/>
            <person name="Murphy E.C."/>
            <person name="Graham I.A."/>
        </authorList>
    </citation>
    <scope>DISRUPTION PHENOTYPE</scope>
</reference>
<reference key="7">
    <citation type="journal article" date="2005" name="J. Biol. Chem.">
        <title>Characterization of Arabidopsis fluoroacetate-resistant mutants reveals the principal mechanism of acetate activation for entry into the glyoxylate cycle.</title>
        <authorList>
            <person name="Turner J.E."/>
            <person name="Greville K."/>
            <person name="Murphy E.C."/>
            <person name="Hooks M.A."/>
        </authorList>
    </citation>
    <scope>FUNCTION</scope>
    <scope>SUBCELLULAR LOCATION</scope>
    <scope>TISSUE SPECIFICITY</scope>
    <scope>DISRUPTION PHENOTYPE</scope>
</reference>
<reference key="8">
    <citation type="journal article" date="2007" name="Plant Cell">
        <title>Proteome analysis of Arabidopsis leaf peroxisomes reveals novel targeting peptides, metabolic pathways, and defense mechanisms.</title>
        <authorList>
            <person name="Reumann S."/>
            <person name="Babujee L."/>
            <person name="Ma C."/>
            <person name="Wienkoop S."/>
            <person name="Siemsen T."/>
            <person name="Antonicelli G.E."/>
            <person name="Rasche N."/>
            <person name="Lueder F."/>
            <person name="Weckwerth W."/>
            <person name="Jahn O."/>
        </authorList>
    </citation>
    <scope>IDENTIFICATION BY MASS SPECTROMETRY</scope>
</reference>
<reference key="9">
    <citation type="journal article" date="2010" name="Biochem. Soc. Trans.">
        <title>Modelling the peroxisomal carbon leak during lipid mobilization in Arabidopsis.</title>
        <authorList>
            <person name="Hooks M.A."/>
            <person name="Allen E."/>
            <person name="Wattis J.A."/>
        </authorList>
    </citation>
    <scope>FUNCTION</scope>
</reference>
<reference key="10">
    <citation type="journal article" date="2011" name="Biochem. J.">
        <title>Evidence that ACN1 (acetate non-utilizing 1) prevents carbon leakage from peroxisomes during lipid mobilization in Arabidopsis seedlings.</title>
        <authorList>
            <person name="Allen E."/>
            <person name="Moing A."/>
            <person name="Wattis J.A."/>
            <person name="Larson T."/>
            <person name="Maucourt M."/>
            <person name="Graham I.A."/>
            <person name="Rolin D."/>
            <person name="Hooks M.A."/>
        </authorList>
    </citation>
    <scope>FUNCTION</scope>
</reference>